<dbReference type="EC" id="1.14.-.-" evidence="1"/>
<dbReference type="EMBL" id="CR543861">
    <property type="protein sequence ID" value="CAG69632.1"/>
    <property type="molecule type" value="Genomic_DNA"/>
</dbReference>
<dbReference type="SMR" id="Q6F8I3"/>
<dbReference type="STRING" id="202950.GCA_001485005_02893"/>
<dbReference type="KEGG" id="aci:ACIAD2917"/>
<dbReference type="eggNOG" id="COG1054">
    <property type="taxonomic scope" value="Bacteria"/>
</dbReference>
<dbReference type="HOGENOM" id="CLU_038878_0_0_6"/>
<dbReference type="Proteomes" id="UP000000430">
    <property type="component" value="Chromosome"/>
</dbReference>
<dbReference type="GO" id="GO:0016705">
    <property type="term" value="F:oxidoreductase activity, acting on paired donors, with incorporation or reduction of molecular oxygen"/>
    <property type="evidence" value="ECO:0007669"/>
    <property type="project" value="UniProtKB-UniRule"/>
</dbReference>
<dbReference type="GO" id="GO:0006400">
    <property type="term" value="P:tRNA modification"/>
    <property type="evidence" value="ECO:0007669"/>
    <property type="project" value="UniProtKB-UniRule"/>
</dbReference>
<dbReference type="CDD" id="cd01518">
    <property type="entry name" value="RHOD_YceA"/>
    <property type="match status" value="1"/>
</dbReference>
<dbReference type="Gene3D" id="3.30.70.100">
    <property type="match status" value="1"/>
</dbReference>
<dbReference type="Gene3D" id="3.40.250.10">
    <property type="entry name" value="Rhodanese-like domain"/>
    <property type="match status" value="1"/>
</dbReference>
<dbReference type="HAMAP" id="MF_00469">
    <property type="entry name" value="TrhO"/>
    <property type="match status" value="1"/>
</dbReference>
<dbReference type="InterPro" id="IPR001763">
    <property type="entry name" value="Rhodanese-like_dom"/>
</dbReference>
<dbReference type="InterPro" id="IPR036873">
    <property type="entry name" value="Rhodanese-like_dom_sf"/>
</dbReference>
<dbReference type="InterPro" id="IPR020936">
    <property type="entry name" value="TrhO"/>
</dbReference>
<dbReference type="InterPro" id="IPR040503">
    <property type="entry name" value="TRHO_N"/>
</dbReference>
<dbReference type="NCBIfam" id="NF001136">
    <property type="entry name" value="PRK00142.1-4"/>
    <property type="match status" value="1"/>
</dbReference>
<dbReference type="PANTHER" id="PTHR43268:SF3">
    <property type="entry name" value="RHODANESE-LIKE DOMAIN-CONTAINING PROTEIN 7-RELATED"/>
    <property type="match status" value="1"/>
</dbReference>
<dbReference type="PANTHER" id="PTHR43268">
    <property type="entry name" value="THIOSULFATE SULFURTRANSFERASE/RHODANESE-LIKE DOMAIN-CONTAINING PROTEIN 2"/>
    <property type="match status" value="1"/>
</dbReference>
<dbReference type="Pfam" id="PF00581">
    <property type="entry name" value="Rhodanese"/>
    <property type="match status" value="1"/>
</dbReference>
<dbReference type="Pfam" id="PF17773">
    <property type="entry name" value="UPF0176_N"/>
    <property type="match status" value="1"/>
</dbReference>
<dbReference type="SMART" id="SM00450">
    <property type="entry name" value="RHOD"/>
    <property type="match status" value="1"/>
</dbReference>
<dbReference type="SUPFAM" id="SSF52821">
    <property type="entry name" value="Rhodanese/Cell cycle control phosphatase"/>
    <property type="match status" value="1"/>
</dbReference>
<dbReference type="PROSITE" id="PS50206">
    <property type="entry name" value="RHODANESE_3"/>
    <property type="match status" value="1"/>
</dbReference>
<gene>
    <name evidence="1" type="primary">trhO</name>
    <name type="ordered locus">ACIAD2917</name>
</gene>
<sequence length="314" mass="35672">MEFSMNATVEQLAPVEQQATTDWVVAALYQFKEVADAADLQQRLLDLVKTINLCGTLIVASEGINGTVAGDRHAIDTIREFLLNEGFHAMEYKESHSAEKPFRKMKIKLKQEIVTLGVEVKPRDLVGHYLDPKEWNELISRDDVILVDTRNDYEYKAGTFKGAIDPKTETFREFPDYVKQNLEQHKDKKIAMFCTGGIRCEKSTSLLLQEGFNEVYHLKGGILKYLEETPAEESLWEGECFVFDGRTAVTHGVEEGQNVKCHACGWPLTPEEVALPSYEHGVSCVYCIEKTTEKQKEGFRMRQSQIAAAKRKRL</sequence>
<keyword id="KW-0560">Oxidoreductase</keyword>
<keyword id="KW-0819">tRNA processing</keyword>
<organism>
    <name type="scientific">Acinetobacter baylyi (strain ATCC 33305 / BD413 / ADP1)</name>
    <dbReference type="NCBI Taxonomy" id="62977"/>
    <lineage>
        <taxon>Bacteria</taxon>
        <taxon>Pseudomonadati</taxon>
        <taxon>Pseudomonadota</taxon>
        <taxon>Gammaproteobacteria</taxon>
        <taxon>Moraxellales</taxon>
        <taxon>Moraxellaceae</taxon>
        <taxon>Acinetobacter</taxon>
    </lineage>
</organism>
<protein>
    <recommendedName>
        <fullName evidence="1">tRNA uridine(34) hydroxylase</fullName>
        <ecNumber evidence="1">1.14.-.-</ecNumber>
    </recommendedName>
    <alternativeName>
        <fullName evidence="1">tRNA hydroxylation protein O</fullName>
    </alternativeName>
</protein>
<accession>Q6F8I3</accession>
<name>TRHO_ACIAD</name>
<feature type="chain" id="PRO_0000161433" description="tRNA uridine(34) hydroxylase">
    <location>
        <begin position="1"/>
        <end position="314"/>
    </location>
</feature>
<feature type="domain" description="Rhodanese" evidence="1">
    <location>
        <begin position="140"/>
        <end position="234"/>
    </location>
</feature>
<feature type="active site" description="Cysteine persulfide intermediate" evidence="1">
    <location>
        <position position="194"/>
    </location>
</feature>
<comment type="function">
    <text evidence="1">Catalyzes oxygen-dependent 5-hydroxyuridine (ho5U) modification at position 34 in tRNAs.</text>
</comment>
<comment type="catalytic activity">
    <reaction evidence="1">
        <text>uridine(34) in tRNA + AH2 + O2 = 5-hydroxyuridine(34) in tRNA + A + H2O</text>
        <dbReference type="Rhea" id="RHEA:64224"/>
        <dbReference type="Rhea" id="RHEA-COMP:11727"/>
        <dbReference type="Rhea" id="RHEA-COMP:13381"/>
        <dbReference type="ChEBI" id="CHEBI:13193"/>
        <dbReference type="ChEBI" id="CHEBI:15377"/>
        <dbReference type="ChEBI" id="CHEBI:15379"/>
        <dbReference type="ChEBI" id="CHEBI:17499"/>
        <dbReference type="ChEBI" id="CHEBI:65315"/>
        <dbReference type="ChEBI" id="CHEBI:136877"/>
    </reaction>
</comment>
<comment type="similarity">
    <text evidence="1">Belongs to the TrhO family.</text>
</comment>
<reference key="1">
    <citation type="journal article" date="2004" name="Nucleic Acids Res.">
        <title>Unique features revealed by the genome sequence of Acinetobacter sp. ADP1, a versatile and naturally transformation competent bacterium.</title>
        <authorList>
            <person name="Barbe V."/>
            <person name="Vallenet D."/>
            <person name="Fonknechten N."/>
            <person name="Kreimeyer A."/>
            <person name="Oztas S."/>
            <person name="Labarre L."/>
            <person name="Cruveiller S."/>
            <person name="Robert C."/>
            <person name="Duprat S."/>
            <person name="Wincker P."/>
            <person name="Ornston L.N."/>
            <person name="Weissenbach J."/>
            <person name="Marliere P."/>
            <person name="Cohen G.N."/>
            <person name="Medigue C."/>
        </authorList>
    </citation>
    <scope>NUCLEOTIDE SEQUENCE [LARGE SCALE GENOMIC DNA]</scope>
    <source>
        <strain>ATCC 33305 / BD413 / ADP1</strain>
    </source>
</reference>
<proteinExistence type="inferred from homology"/>
<evidence type="ECO:0000255" key="1">
    <source>
        <dbReference type="HAMAP-Rule" id="MF_00469"/>
    </source>
</evidence>